<dbReference type="EMBL" id="AY509253">
    <property type="protein sequence ID" value="AAS00960.1"/>
    <property type="molecule type" value="Genomic_DNA"/>
</dbReference>
<dbReference type="RefSeq" id="YP_024613.1">
    <property type="nucleotide sequence ID" value="NC_005881.2"/>
</dbReference>
<dbReference type="KEGG" id="vg:2948159"/>
<dbReference type="Proteomes" id="UP000007021">
    <property type="component" value="Segment"/>
</dbReference>
<accession>Q6R7F5</accession>
<feature type="signal peptide" evidence="1">
    <location>
        <begin position="1"/>
        <end position="18"/>
    </location>
</feature>
<feature type="chain" id="PRO_0000385095" description="Uncharacterized protein ORF74">
    <location>
        <begin position="19"/>
        <end position="118"/>
    </location>
</feature>
<feature type="glycosylation site" description="N-linked (GlcNAc...) asparagine; by host" evidence="1">
    <location>
        <position position="24"/>
    </location>
</feature>
<name>Y074_OSHVF</name>
<proteinExistence type="inferred from homology"/>
<evidence type="ECO:0000255" key="1"/>
<organismHost>
    <name type="scientific">Magallana gigas</name>
    <name type="common">Pacific oyster</name>
    <name type="synonym">Crassostrea gigas</name>
    <dbReference type="NCBI Taxonomy" id="29159"/>
</organismHost>
<organismHost>
    <name type="scientific">Pecten maximus</name>
    <name type="common">King scallop</name>
    <name type="synonym">Pilgrim's clam</name>
    <dbReference type="NCBI Taxonomy" id="6579"/>
</organismHost>
<protein>
    <recommendedName>
        <fullName>Uncharacterized protein ORF74</fullName>
    </recommendedName>
</protein>
<sequence>MSKLIFLFVVATLATIKASPFDLNMSTPLCDGNLDNRPCRLGDFQVKEEYIRVPITKSADTSTFYTCAWRKMVPCTRWNMVYWNHRLMVRQFKNKPEDTLFLGIKIARPGDWLLGDSH</sequence>
<organism>
    <name type="scientific">Ostreid herpesvirus 1 (isolate France)</name>
    <name type="common">OsHV-1</name>
    <name type="synonym">Pacific oyster herpesvirus</name>
    <dbReference type="NCBI Taxonomy" id="654903"/>
    <lineage>
        <taxon>Viruses</taxon>
        <taxon>Duplodnaviria</taxon>
        <taxon>Heunggongvirae</taxon>
        <taxon>Peploviricota</taxon>
        <taxon>Herviviricetes</taxon>
        <taxon>Herpesvirales</taxon>
        <taxon>Malacoherpesviridae</taxon>
        <taxon>Ostreavirus</taxon>
        <taxon>Ostreavirus ostreidmalaco1</taxon>
        <taxon>Ostreid herpesvirus 1</taxon>
    </lineage>
</organism>
<reference key="1">
    <citation type="journal article" date="2005" name="J. Gen. Virol.">
        <title>A novel class of herpesvirus with bivalve hosts.</title>
        <authorList>
            <person name="Davison A.J."/>
            <person name="Trus B.L."/>
            <person name="Cheng N."/>
            <person name="Steven A.C."/>
            <person name="Watson M.S."/>
            <person name="Cunningham C."/>
            <person name="Le Deuff R.M."/>
            <person name="Renault T."/>
        </authorList>
    </citation>
    <scope>NUCLEOTIDE SEQUENCE [LARGE SCALE GENOMIC DNA]</scope>
</reference>
<gene>
    <name type="ORF">ORF74</name>
</gene>
<keyword id="KW-0325">Glycoprotein</keyword>
<keyword id="KW-1185">Reference proteome</keyword>
<keyword id="KW-0732">Signal</keyword>